<reference key="1">
    <citation type="journal article" date="2004" name="J. Bacteriol.">
        <title>Complete genome sequence of Rickettsia typhi and comparison with sequences of other Rickettsiae.</title>
        <authorList>
            <person name="McLeod M.P."/>
            <person name="Qin X."/>
            <person name="Karpathy S.E."/>
            <person name="Gioia J."/>
            <person name="Highlander S.K."/>
            <person name="Fox G.E."/>
            <person name="McNeill T.Z."/>
            <person name="Jiang H."/>
            <person name="Muzny D."/>
            <person name="Jacob L.S."/>
            <person name="Hawes A.C."/>
            <person name="Sodergren E."/>
            <person name="Gill R."/>
            <person name="Hume J."/>
            <person name="Morgan M."/>
            <person name="Fan G."/>
            <person name="Amin A.G."/>
            <person name="Gibbs R.A."/>
            <person name="Hong C."/>
            <person name="Yu X.-J."/>
            <person name="Walker D.H."/>
            <person name="Weinstock G.M."/>
        </authorList>
    </citation>
    <scope>NUCLEOTIDE SEQUENCE [LARGE SCALE GENOMIC DNA]</scope>
    <source>
        <strain>ATCC VR-144 / Wilmington</strain>
    </source>
</reference>
<dbReference type="EMBL" id="AE017197">
    <property type="protein sequence ID" value="AAU03628.1"/>
    <property type="molecule type" value="Genomic_DNA"/>
</dbReference>
<dbReference type="RefSeq" id="WP_011190615.1">
    <property type="nucleotide sequence ID" value="NC_006142.1"/>
</dbReference>
<dbReference type="SMR" id="Q68XL4"/>
<dbReference type="KEGG" id="rty:RT0143"/>
<dbReference type="eggNOG" id="COG0233">
    <property type="taxonomic scope" value="Bacteria"/>
</dbReference>
<dbReference type="HOGENOM" id="CLU_073981_2_1_5"/>
<dbReference type="OrthoDB" id="9804006at2"/>
<dbReference type="Proteomes" id="UP000000604">
    <property type="component" value="Chromosome"/>
</dbReference>
<dbReference type="GO" id="GO:0005829">
    <property type="term" value="C:cytosol"/>
    <property type="evidence" value="ECO:0007669"/>
    <property type="project" value="GOC"/>
</dbReference>
<dbReference type="GO" id="GO:0043023">
    <property type="term" value="F:ribosomal large subunit binding"/>
    <property type="evidence" value="ECO:0007669"/>
    <property type="project" value="TreeGrafter"/>
</dbReference>
<dbReference type="GO" id="GO:0002184">
    <property type="term" value="P:cytoplasmic translational termination"/>
    <property type="evidence" value="ECO:0007669"/>
    <property type="project" value="TreeGrafter"/>
</dbReference>
<dbReference type="CDD" id="cd00520">
    <property type="entry name" value="RRF"/>
    <property type="match status" value="1"/>
</dbReference>
<dbReference type="FunFam" id="1.10.132.20:FF:000001">
    <property type="entry name" value="Ribosome-recycling factor"/>
    <property type="match status" value="1"/>
</dbReference>
<dbReference type="FunFam" id="3.30.1360.40:FF:000001">
    <property type="entry name" value="Ribosome-recycling factor"/>
    <property type="match status" value="1"/>
</dbReference>
<dbReference type="Gene3D" id="3.30.1360.40">
    <property type="match status" value="1"/>
</dbReference>
<dbReference type="Gene3D" id="1.10.132.20">
    <property type="entry name" value="Ribosome-recycling factor"/>
    <property type="match status" value="1"/>
</dbReference>
<dbReference type="HAMAP" id="MF_00040">
    <property type="entry name" value="RRF"/>
    <property type="match status" value="1"/>
</dbReference>
<dbReference type="InterPro" id="IPR002661">
    <property type="entry name" value="Ribosome_recyc_fac"/>
</dbReference>
<dbReference type="InterPro" id="IPR023584">
    <property type="entry name" value="Ribosome_recyc_fac_dom"/>
</dbReference>
<dbReference type="InterPro" id="IPR036191">
    <property type="entry name" value="RRF_sf"/>
</dbReference>
<dbReference type="NCBIfam" id="TIGR00496">
    <property type="entry name" value="frr"/>
    <property type="match status" value="1"/>
</dbReference>
<dbReference type="PANTHER" id="PTHR20982:SF3">
    <property type="entry name" value="MITOCHONDRIAL RIBOSOME RECYCLING FACTOR PSEUDO 1"/>
    <property type="match status" value="1"/>
</dbReference>
<dbReference type="PANTHER" id="PTHR20982">
    <property type="entry name" value="RIBOSOME RECYCLING FACTOR"/>
    <property type="match status" value="1"/>
</dbReference>
<dbReference type="Pfam" id="PF01765">
    <property type="entry name" value="RRF"/>
    <property type="match status" value="1"/>
</dbReference>
<dbReference type="SUPFAM" id="SSF55194">
    <property type="entry name" value="Ribosome recycling factor, RRF"/>
    <property type="match status" value="1"/>
</dbReference>
<organism>
    <name type="scientific">Rickettsia typhi (strain ATCC VR-144 / Wilmington)</name>
    <dbReference type="NCBI Taxonomy" id="257363"/>
    <lineage>
        <taxon>Bacteria</taxon>
        <taxon>Pseudomonadati</taxon>
        <taxon>Pseudomonadota</taxon>
        <taxon>Alphaproteobacteria</taxon>
        <taxon>Rickettsiales</taxon>
        <taxon>Rickettsiaceae</taxon>
        <taxon>Rickettsieae</taxon>
        <taxon>Rickettsia</taxon>
        <taxon>typhus group</taxon>
    </lineage>
</organism>
<proteinExistence type="inferred from homology"/>
<name>RRF_RICTY</name>
<evidence type="ECO:0000255" key="1">
    <source>
        <dbReference type="HAMAP-Rule" id="MF_00040"/>
    </source>
</evidence>
<gene>
    <name evidence="1" type="primary">frr</name>
    <name type="ordered locus">RT0143</name>
</gene>
<keyword id="KW-0963">Cytoplasm</keyword>
<keyword id="KW-0648">Protein biosynthesis</keyword>
<protein>
    <recommendedName>
        <fullName evidence="1">Ribosome-recycling factor</fullName>
        <shortName evidence="1">RRF</shortName>
    </recommendedName>
    <alternativeName>
        <fullName evidence="1">Ribosome-releasing factor</fullName>
    </alternativeName>
</protein>
<accession>Q68XL4</accession>
<comment type="function">
    <text evidence="1">Responsible for the release of ribosomes from messenger RNA at the termination of protein biosynthesis. May increase the efficiency of translation by recycling ribosomes from one round of translation to another.</text>
</comment>
<comment type="subcellular location">
    <subcellularLocation>
        <location evidence="1">Cytoplasm</location>
    </subcellularLocation>
</comment>
<comment type="similarity">
    <text evidence="1">Belongs to the RRF family.</text>
</comment>
<feature type="chain" id="PRO_0000167530" description="Ribosome-recycling factor">
    <location>
        <begin position="1"/>
        <end position="186"/>
    </location>
</feature>
<sequence>MEKNNLKKILQEKMEKAIKVLGNELKGLRTGRASVNFLDSVTVEAYGSKVPLAQVASLSTPDARTINVQVWDKSMVSSVEKGITIANLGLTHATDGQLIRLPIPSLTEERRKEFVKLAHKYGEETKISLRNIRRDGIEELKKLEKDNIIVKDEYHSLSEQVQKLTDEYSSKVDSAIKQKEHEIMTV</sequence>